<sequence>MQLTSYTDYSLRLLLYLALQPKHKLSSVKQVADIYRISYNHLTKVTHELGKLGLIETIKGRNGGIRLAKEPEEINIGEVVKQTEDNLELVECFNRETNTCILNPACRLKGVLHEALAAYLQVLEQYTVKDLVLNEDDLRALLQFKTTEQ</sequence>
<accession>Q5WL64</accession>
<comment type="function">
    <text evidence="1">Nitric oxide-responsive transcriptional regulator.</text>
</comment>
<comment type="cofactor">
    <cofactor evidence="3">
        <name>[2Fe-2S] cluster</name>
        <dbReference type="ChEBI" id="CHEBI:190135"/>
    </cofactor>
    <text evidence="3">Binds 1 [2Fe-2S] cluster per subunit.</text>
</comment>
<name>NSRR_SHOC1</name>
<feature type="chain" id="PRO_0000271132" description="HTH-type transcriptional regulator NsrR">
    <location>
        <begin position="1"/>
        <end position="149"/>
    </location>
</feature>
<feature type="domain" description="HTH rrf2-type" evidence="2">
    <location>
        <begin position="2"/>
        <end position="133"/>
    </location>
</feature>
<feature type="DNA-binding region" description="H-T-H motif" evidence="2">
    <location>
        <begin position="28"/>
        <end position="51"/>
    </location>
</feature>
<feature type="binding site" evidence="2">
    <location>
        <position position="92"/>
    </location>
    <ligand>
        <name>[2Fe-2S] cluster</name>
        <dbReference type="ChEBI" id="CHEBI:190135"/>
    </ligand>
</feature>
<feature type="binding site" evidence="2">
    <location>
        <position position="100"/>
    </location>
    <ligand>
        <name>[2Fe-2S] cluster</name>
        <dbReference type="ChEBI" id="CHEBI:190135"/>
    </ligand>
</feature>
<feature type="binding site" evidence="2">
    <location>
        <position position="106"/>
    </location>
    <ligand>
        <name>[2Fe-2S] cluster</name>
        <dbReference type="ChEBI" id="CHEBI:190135"/>
    </ligand>
</feature>
<dbReference type="EMBL" id="AP006627">
    <property type="protein sequence ID" value="BAD62891.1"/>
    <property type="molecule type" value="Genomic_DNA"/>
</dbReference>
<dbReference type="RefSeq" id="WP_011245210.1">
    <property type="nucleotide sequence ID" value="NC_006582.1"/>
</dbReference>
<dbReference type="SMR" id="Q5WL64"/>
<dbReference type="STRING" id="66692.ABC0349"/>
<dbReference type="KEGG" id="bcl:ABC0349"/>
<dbReference type="eggNOG" id="COG1959">
    <property type="taxonomic scope" value="Bacteria"/>
</dbReference>
<dbReference type="HOGENOM" id="CLU_107144_2_1_9"/>
<dbReference type="OrthoDB" id="9795923at2"/>
<dbReference type="Proteomes" id="UP000001168">
    <property type="component" value="Chromosome"/>
</dbReference>
<dbReference type="GO" id="GO:0005829">
    <property type="term" value="C:cytosol"/>
    <property type="evidence" value="ECO:0007669"/>
    <property type="project" value="TreeGrafter"/>
</dbReference>
<dbReference type="GO" id="GO:0051537">
    <property type="term" value="F:2 iron, 2 sulfur cluster binding"/>
    <property type="evidence" value="ECO:0007669"/>
    <property type="project" value="UniProtKB-KW"/>
</dbReference>
<dbReference type="GO" id="GO:0003677">
    <property type="term" value="F:DNA binding"/>
    <property type="evidence" value="ECO:0007669"/>
    <property type="project" value="UniProtKB-KW"/>
</dbReference>
<dbReference type="GO" id="GO:0003700">
    <property type="term" value="F:DNA-binding transcription factor activity"/>
    <property type="evidence" value="ECO:0007669"/>
    <property type="project" value="TreeGrafter"/>
</dbReference>
<dbReference type="GO" id="GO:0046872">
    <property type="term" value="F:metal ion binding"/>
    <property type="evidence" value="ECO:0007669"/>
    <property type="project" value="UniProtKB-KW"/>
</dbReference>
<dbReference type="Gene3D" id="1.10.10.10">
    <property type="entry name" value="Winged helix-like DNA-binding domain superfamily/Winged helix DNA-binding domain"/>
    <property type="match status" value="1"/>
</dbReference>
<dbReference type="InterPro" id="IPR030489">
    <property type="entry name" value="TR_Rrf2-type_CS"/>
</dbReference>
<dbReference type="InterPro" id="IPR000944">
    <property type="entry name" value="Tscrpt_reg_Rrf2"/>
</dbReference>
<dbReference type="InterPro" id="IPR036388">
    <property type="entry name" value="WH-like_DNA-bd_sf"/>
</dbReference>
<dbReference type="InterPro" id="IPR036390">
    <property type="entry name" value="WH_DNA-bd_sf"/>
</dbReference>
<dbReference type="NCBIfam" id="TIGR00738">
    <property type="entry name" value="rrf2_super"/>
    <property type="match status" value="1"/>
</dbReference>
<dbReference type="PANTHER" id="PTHR33221:SF4">
    <property type="entry name" value="HTH-TYPE TRANSCRIPTIONAL REPRESSOR NSRR"/>
    <property type="match status" value="1"/>
</dbReference>
<dbReference type="PANTHER" id="PTHR33221">
    <property type="entry name" value="WINGED HELIX-TURN-HELIX TRANSCRIPTIONAL REGULATOR, RRF2 FAMILY"/>
    <property type="match status" value="1"/>
</dbReference>
<dbReference type="Pfam" id="PF02082">
    <property type="entry name" value="Rrf2"/>
    <property type="match status" value="1"/>
</dbReference>
<dbReference type="SUPFAM" id="SSF46785">
    <property type="entry name" value="Winged helix' DNA-binding domain"/>
    <property type="match status" value="1"/>
</dbReference>
<dbReference type="PROSITE" id="PS01332">
    <property type="entry name" value="HTH_RRF2_1"/>
    <property type="match status" value="1"/>
</dbReference>
<dbReference type="PROSITE" id="PS51197">
    <property type="entry name" value="HTH_RRF2_2"/>
    <property type="match status" value="1"/>
</dbReference>
<gene>
    <name type="primary">nsrR</name>
    <name type="ordered locus">ABC0349</name>
</gene>
<keyword id="KW-0001">2Fe-2S</keyword>
<keyword id="KW-0238">DNA-binding</keyword>
<keyword id="KW-0408">Iron</keyword>
<keyword id="KW-0411">Iron-sulfur</keyword>
<keyword id="KW-0479">Metal-binding</keyword>
<keyword id="KW-1185">Reference proteome</keyword>
<keyword id="KW-0804">Transcription</keyword>
<keyword id="KW-0805">Transcription regulation</keyword>
<protein>
    <recommendedName>
        <fullName>HTH-type transcriptional regulator NsrR</fullName>
    </recommendedName>
</protein>
<evidence type="ECO:0000250" key="1"/>
<evidence type="ECO:0000255" key="2">
    <source>
        <dbReference type="PROSITE-ProRule" id="PRU00540"/>
    </source>
</evidence>
<evidence type="ECO:0000305" key="3"/>
<organism>
    <name type="scientific">Shouchella clausii (strain KSM-K16)</name>
    <name type="common">Alkalihalobacillus clausii</name>
    <dbReference type="NCBI Taxonomy" id="66692"/>
    <lineage>
        <taxon>Bacteria</taxon>
        <taxon>Bacillati</taxon>
        <taxon>Bacillota</taxon>
        <taxon>Bacilli</taxon>
        <taxon>Bacillales</taxon>
        <taxon>Bacillaceae</taxon>
        <taxon>Shouchella</taxon>
    </lineage>
</organism>
<reference key="1">
    <citation type="submission" date="2003-10" db="EMBL/GenBank/DDBJ databases">
        <title>The complete genome sequence of the alkaliphilic Bacillus clausii KSM-K16.</title>
        <authorList>
            <person name="Takaki Y."/>
            <person name="Kageyama Y."/>
            <person name="Shimamura S."/>
            <person name="Suzuki H."/>
            <person name="Nishi S."/>
            <person name="Hatada Y."/>
            <person name="Kawai S."/>
            <person name="Ito S."/>
            <person name="Horikoshi K."/>
        </authorList>
    </citation>
    <scope>NUCLEOTIDE SEQUENCE [LARGE SCALE GENOMIC DNA]</scope>
    <source>
        <strain>KSM-K16</strain>
    </source>
</reference>
<proteinExistence type="inferred from homology"/>